<evidence type="ECO:0000269" key="1">
    <source>
    </source>
</evidence>
<evidence type="ECO:0000269" key="2">
    <source>
    </source>
</evidence>
<evidence type="ECO:0000303" key="3">
    <source>
    </source>
</evidence>
<evidence type="ECO:0000303" key="4">
    <source>
    </source>
</evidence>
<evidence type="ECO:0000305" key="5"/>
<evidence type="ECO:0000305" key="6">
    <source>
    </source>
</evidence>
<evidence type="ECO:0000305" key="7">
    <source>
    </source>
</evidence>
<evidence type="ECO:0007744" key="8">
    <source>
        <dbReference type="PDB" id="5U9R"/>
    </source>
</evidence>
<evidence type="ECO:0007744" key="9">
    <source>
        <dbReference type="PDB" id="5U9X"/>
    </source>
</evidence>
<evidence type="ECO:0007744" key="10">
    <source>
        <dbReference type="PDB" id="5UA7"/>
    </source>
</evidence>
<evidence type="ECO:0007829" key="11">
    <source>
        <dbReference type="PDB" id="5U9R"/>
    </source>
</evidence>
<protein>
    <recommendedName>
        <fullName evidence="4">Ocellatin-LB2</fullName>
    </recommendedName>
    <alternativeName>
        <fullName evidence="3">Des-Lys24-Leu25-ocellatin-F1</fullName>
    </alternativeName>
</protein>
<keyword id="KW-0002">3D-structure</keyword>
<keyword id="KW-0027">Amidation</keyword>
<keyword id="KW-0878">Amphibian defense peptide</keyword>
<keyword id="KW-0044">Antibiotic</keyword>
<keyword id="KW-0929">Antimicrobial</keyword>
<keyword id="KW-0903">Direct protein sequencing</keyword>
<keyword id="KW-0964">Secreted</keyword>
<dbReference type="PDB" id="5U9R">
    <property type="method" value="NMR"/>
    <property type="chains" value="A=1-23"/>
</dbReference>
<dbReference type="PDB" id="5U9X">
    <property type="method" value="NMR"/>
    <property type="chains" value="A=1-23"/>
</dbReference>
<dbReference type="PDB" id="5UA7">
    <property type="method" value="NMR"/>
    <property type="chains" value="A=1-23"/>
</dbReference>
<dbReference type="PDBsum" id="5U9R"/>
<dbReference type="PDBsum" id="5U9X"/>
<dbReference type="PDBsum" id="5UA7"/>
<dbReference type="SMR" id="C0HKF2"/>
<dbReference type="GO" id="GO:0005576">
    <property type="term" value="C:extracellular region"/>
    <property type="evidence" value="ECO:0007669"/>
    <property type="project" value="UniProtKB-SubCell"/>
</dbReference>
<dbReference type="GO" id="GO:0042742">
    <property type="term" value="P:defense response to bacterium"/>
    <property type="evidence" value="ECO:0007669"/>
    <property type="project" value="UniProtKB-KW"/>
</dbReference>
<dbReference type="GO" id="GO:0019836">
    <property type="term" value="P:symbiont-mediated hemolysis of host erythrocyte"/>
    <property type="evidence" value="ECO:0007669"/>
    <property type="project" value="InterPro"/>
</dbReference>
<dbReference type="InterPro" id="IPR012518">
    <property type="entry name" value="Antimicrobial15"/>
</dbReference>
<dbReference type="Pfam" id="PF08110">
    <property type="entry name" value="Antimicrobial15"/>
    <property type="match status" value="1"/>
</dbReference>
<feature type="peptide" id="PRO_0000439886" description="Ocellatin-LB2" evidence="1 2">
    <location>
        <begin position="1"/>
        <end position="23"/>
    </location>
</feature>
<feature type="modified residue" description="Asparagine amide" evidence="2">
    <location>
        <position position="23"/>
    </location>
</feature>
<feature type="helix" evidence="11">
    <location>
        <begin position="2"/>
        <end position="22"/>
    </location>
</feature>
<accession>C0HKF2</accession>
<accession>A0A1W2VMY9</accession>
<sequence length="23" mass="2308">GVVDILKGAAKDIAGHLASKVMN</sequence>
<name>OCE2_LEPLB</name>
<comment type="function">
    <text evidence="2">Antibacterial peptide that inhibits the Gram-negative bacterium A.actinomycetemcomitans ATCC 29522 (MIC=210 uM). No activity against the bacteria E.coli ATCC 25922 and S.aureus ATCC 25923, or the fungi C.albicans ATCC 18804 and C.lusitaniae ATCC 56936. Does not show hemolytic activity towards rabbit erythrocytes.</text>
</comment>
<comment type="subcellular location">
    <subcellularLocation>
        <location evidence="1 2">Secreted</location>
    </subcellularLocation>
</comment>
<comment type="tissue specificity">
    <text evidence="6 7">Expressed by the skin glands.</text>
</comment>
<comment type="mass spectrometry" mass="2192.8" method="Electrospray" evidence="1"/>
<comment type="mass spectrometry" mass="2304.95" error="0.012" method="MALDI" evidence="2"/>
<comment type="similarity">
    <text evidence="5">Belongs to the frog skin active peptide (FSAP) family. Ocellatin subfamily.</text>
</comment>
<comment type="online information" name="The antimicrobial peptide database">
    <link uri="https://wangapd3.com/database/query_output.php?ID=02971"/>
</comment>
<proteinExistence type="evidence at protein level"/>
<reference key="1">
    <citation type="journal article" date="2015" name="J. Venom. Anim. Toxins Incl. Trop. Dis.">
        <title>Synergic effects between ocellatin-F1 and bufotenine on the inhibition of BHK-21 cellular infection by the rabies virus.</title>
        <authorList>
            <person name="Cunha Neto Rdos S."/>
            <person name="Vigerelli H."/>
            <person name="Jared C."/>
            <person name="Antoniazzi M.M."/>
            <person name="Chaves L.B."/>
            <person name="da Silva Ade C."/>
            <person name="Melo R.L."/>
            <person name="Sciani J.M."/>
            <person name="Pimenta D.C."/>
        </authorList>
    </citation>
    <scope>PROTEIN SEQUENCE</scope>
    <scope>SUBCELLULAR LOCATION</scope>
    <scope>MASS SPECTROMETRY</scope>
    <source>
        <tissue>Skin secretion</tissue>
    </source>
</reference>
<reference key="2">
    <citation type="journal article" date="2017" name="J. Venom. Anim. Toxins Incl. Trop. Dis.">
        <title>Ocellatin peptides from the skin secretion of the South American frog Leptodactylus labyrinthicus (Leptodactylidae): characterization, antimicrobial activities and membrane interactions.</title>
        <authorList>
            <person name="Gusmao K.A."/>
            <person name="Dos Santos D.M."/>
            <person name="Santos V.M."/>
            <person name="Cortes M.E."/>
            <person name="Reis P.V."/>
            <person name="Santos V.L."/>
            <person name="Pilo-Veloso D."/>
            <person name="Verly R.M."/>
            <person name="de Lima M.E."/>
            <person name="Resende J.M."/>
        </authorList>
    </citation>
    <scope>PROTEIN SEQUENCE</scope>
    <scope>FUNCTION</scope>
    <scope>SUBCELLULAR LOCATION</scope>
    <scope>MASS SPECTROMETRY</scope>
    <scope>AMIDATION AT ASN-23</scope>
    <source>
        <tissue>Skin secretion</tissue>
    </source>
</reference>
<reference evidence="8 9 10" key="3">
    <citation type="journal article" date="2018" name="Peptides">
        <title>NMR structures in different membrane environments of three ocellatin peptides isolated from Leptodactylus labyrinthicus.</title>
        <authorList>
            <person name="Gomes K.A.G.G."/>
            <person name="Dos Santos D.M."/>
            <person name="Santos V.M."/>
            <person name="Pilo-Veloso D."/>
            <person name="Mundim H.M."/>
            <person name="Rodrigues L.V."/>
            <person name="Liao L.M."/>
            <person name="Verly R.M."/>
            <person name="de Lima M.E."/>
            <person name="Resende J.M."/>
        </authorList>
    </citation>
    <scope>STRUCTURE BY NMR IN PRESENCE OF ANIONIC SDS MICELLES; ZWITTERIONIC DPC MICELLES AND TFE:H2O SOLUTION</scope>
</reference>
<organism>
    <name type="scientific">Leptodactylus labyrinthicus</name>
    <name type="common">Labyrinth frog</name>
    <dbReference type="NCBI Taxonomy" id="326590"/>
    <lineage>
        <taxon>Eukaryota</taxon>
        <taxon>Metazoa</taxon>
        <taxon>Chordata</taxon>
        <taxon>Craniata</taxon>
        <taxon>Vertebrata</taxon>
        <taxon>Euteleostomi</taxon>
        <taxon>Amphibia</taxon>
        <taxon>Batrachia</taxon>
        <taxon>Anura</taxon>
        <taxon>Neobatrachia</taxon>
        <taxon>Hyloidea</taxon>
        <taxon>Leptodactylidae</taxon>
        <taxon>Leptodactylinae</taxon>
        <taxon>Leptodactylus</taxon>
    </lineage>
</organism>